<evidence type="ECO:0000250" key="1">
    <source>
        <dbReference type="UniProtKB" id="E7CLP2"/>
    </source>
</evidence>
<evidence type="ECO:0000250" key="2">
    <source>
        <dbReference type="UniProtKB" id="P15226"/>
    </source>
</evidence>
<evidence type="ECO:0000255" key="3"/>
<evidence type="ECO:0000255" key="4">
    <source>
        <dbReference type="PROSITE-ProRule" id="PRU01210"/>
    </source>
</evidence>
<evidence type="ECO:0000269" key="5">
    <source>
    </source>
</evidence>
<evidence type="ECO:0000303" key="6">
    <source>
    </source>
</evidence>
<evidence type="ECO:0000305" key="7"/>
<evidence type="ECO:0000305" key="8">
    <source>
    </source>
</evidence>
<comment type="function">
    <text evidence="5">Causes transient paralysis of the rear legs of and spasms in insects (A.domestica).</text>
</comment>
<comment type="subcellular location">
    <subcellularLocation>
        <location evidence="5">Secreted</location>
    </subcellularLocation>
</comment>
<comment type="tissue specificity">
    <text evidence="8">Expressed by the venom gland.</text>
</comment>
<comment type="domain">
    <text evidence="7">Has the structural arrangement of an alpha-helix connected to antiparallel beta-sheets by disulfide bonds (CS-alpha/beta).</text>
</comment>
<comment type="mass spectrometry"/>
<comment type="similarity">
    <text evidence="3">Belongs to the long (4 C-C) scorpion toxin superfamily. Sodium channel inhibitor family. Beta subfamily.</text>
</comment>
<keyword id="KW-0903">Direct protein sequencing</keyword>
<keyword id="KW-1015">Disulfide bond</keyword>
<keyword id="KW-0528">Neurotoxin</keyword>
<keyword id="KW-0964">Secreted</keyword>
<keyword id="KW-0800">Toxin</keyword>
<dbReference type="GO" id="GO:0005576">
    <property type="term" value="C:extracellular region"/>
    <property type="evidence" value="ECO:0007669"/>
    <property type="project" value="UniProtKB-SubCell"/>
</dbReference>
<dbReference type="GO" id="GO:0019871">
    <property type="term" value="F:sodium channel inhibitor activity"/>
    <property type="evidence" value="ECO:0007669"/>
    <property type="project" value="InterPro"/>
</dbReference>
<dbReference type="GO" id="GO:0090729">
    <property type="term" value="F:toxin activity"/>
    <property type="evidence" value="ECO:0007669"/>
    <property type="project" value="UniProtKB-KW"/>
</dbReference>
<dbReference type="CDD" id="cd23106">
    <property type="entry name" value="neurotoxins_LC_scorpion"/>
    <property type="match status" value="1"/>
</dbReference>
<dbReference type="Gene3D" id="3.30.30.10">
    <property type="entry name" value="Knottin, scorpion toxin-like"/>
    <property type="match status" value="1"/>
</dbReference>
<dbReference type="InterPro" id="IPR044062">
    <property type="entry name" value="LCN-type_CS_alpha_beta_dom"/>
</dbReference>
<dbReference type="InterPro" id="IPR036574">
    <property type="entry name" value="Scorpion_toxin-like_sf"/>
</dbReference>
<dbReference type="InterPro" id="IPR018218">
    <property type="entry name" value="Scorpion_toxinL"/>
</dbReference>
<dbReference type="InterPro" id="IPR002061">
    <property type="entry name" value="Scorpion_toxinL/defensin"/>
</dbReference>
<dbReference type="Pfam" id="PF00537">
    <property type="entry name" value="Toxin_3"/>
    <property type="match status" value="1"/>
</dbReference>
<dbReference type="PRINTS" id="PR00285">
    <property type="entry name" value="SCORPNTOXIN"/>
</dbReference>
<dbReference type="SUPFAM" id="SSF57095">
    <property type="entry name" value="Scorpion toxin-like"/>
    <property type="match status" value="1"/>
</dbReference>
<dbReference type="PROSITE" id="PS51863">
    <property type="entry name" value="LCN_CSAB"/>
    <property type="match status" value="1"/>
</dbReference>
<organism>
    <name type="scientific">Rhopalurus junceus</name>
    <name type="common">Caribbean blue scorpion</name>
    <dbReference type="NCBI Taxonomy" id="419285"/>
    <lineage>
        <taxon>Eukaryota</taxon>
        <taxon>Metazoa</taxon>
        <taxon>Ecdysozoa</taxon>
        <taxon>Arthropoda</taxon>
        <taxon>Chelicerata</taxon>
        <taxon>Arachnida</taxon>
        <taxon>Scorpiones</taxon>
        <taxon>Buthida</taxon>
        <taxon>Buthoidea</taxon>
        <taxon>Buthidae</taxon>
        <taxon>Rhopalurus</taxon>
    </lineage>
</organism>
<proteinExistence type="evidence at protein level"/>
<protein>
    <recommendedName>
        <fullName evidence="1">Putative beta-neurotoxin</fullName>
    </recommendedName>
</protein>
<feature type="chain" id="PRO_0000413461" description="Putative beta-neurotoxin">
    <location>
        <begin position="1"/>
        <end position="47" status="greater than"/>
    </location>
</feature>
<feature type="domain" description="LCN-type CS-alpha/beta" evidence="4">
    <location>
        <begin position="1"/>
        <end position="47" status="greater than"/>
    </location>
</feature>
<feature type="disulfide bond" evidence="2">
    <location>
        <begin position="10"/>
        <end status="unknown"/>
    </location>
</feature>
<feature type="disulfide bond" evidence="4">
    <location>
        <begin position="14"/>
        <end position="36"/>
    </location>
</feature>
<feature type="disulfide bond" evidence="4">
    <location>
        <begin position="21"/>
        <end position="43"/>
    </location>
</feature>
<feature type="disulfide bond" evidence="2">
    <location>
        <begin position="25"/>
        <end status="unknown"/>
    </location>
</feature>
<feature type="non-terminal residue" evidence="6">
    <location>
        <position position="47"/>
    </location>
</feature>
<reference evidence="7" key="1">
    <citation type="journal article" date="2011" name="Toxicon">
        <title>Biochemical and molecular characterization of the venom from the Cuban scorpion Rhopalurus junceus.</title>
        <authorList>
            <person name="Garcia-Gomez B.I."/>
            <person name="Coronas F.I."/>
            <person name="Restano-Cassulini R."/>
            <person name="Rodriguez R.R."/>
            <person name="Possani L.D."/>
        </authorList>
    </citation>
    <scope>PROTEIN SEQUENCE</scope>
    <scope>FUNCTION</scope>
    <scope>SUBCELLULAR LOCATION</scope>
    <scope>MASS SPECTROMETRY</scope>
    <source>
        <tissue evidence="5">Venom</tissue>
    </source>
</reference>
<sequence>KEGYMGSDGCKMSCVINDQFCDTECQAKLKGSTGYCYFXGLACYXXG</sequence>
<name>SCXB_RHOJU</name>
<accession>P86992</accession>